<dbReference type="EC" id="1.1.1.8"/>
<dbReference type="EMBL" id="D50797">
    <property type="protein sequence ID" value="BAA09425.1"/>
    <property type="molecule type" value="Genomic_DNA"/>
</dbReference>
<dbReference type="EMBL" id="CU329670">
    <property type="protein sequence ID" value="CAA91239.1"/>
    <property type="molecule type" value="Genomic_DNA"/>
</dbReference>
<dbReference type="PIR" id="JC6053">
    <property type="entry name" value="JC6053"/>
</dbReference>
<dbReference type="RefSeq" id="NP_594542.1">
    <property type="nucleotide sequence ID" value="NM_001019971.2"/>
</dbReference>
<dbReference type="SMR" id="Q09845"/>
<dbReference type="BioGRID" id="278004">
    <property type="interactions" value="14"/>
</dbReference>
<dbReference type="FunCoup" id="Q09845">
    <property type="interactions" value="380"/>
</dbReference>
<dbReference type="STRING" id="284812.Q09845"/>
<dbReference type="iPTMnet" id="Q09845"/>
<dbReference type="PaxDb" id="4896-SPAC23D3.04c.1"/>
<dbReference type="EnsemblFungi" id="SPAC23D3.04c.1">
    <property type="protein sequence ID" value="SPAC23D3.04c.1:pep"/>
    <property type="gene ID" value="SPAC23D3.04c"/>
</dbReference>
<dbReference type="GeneID" id="2541502"/>
<dbReference type="KEGG" id="spo:2541502"/>
<dbReference type="PomBase" id="SPAC23D3.04c">
    <property type="gene designation" value="gpd2"/>
</dbReference>
<dbReference type="VEuPathDB" id="FungiDB:SPAC23D3.04c"/>
<dbReference type="eggNOG" id="KOG2711">
    <property type="taxonomic scope" value="Eukaryota"/>
</dbReference>
<dbReference type="HOGENOM" id="CLU_033449_2_2_1"/>
<dbReference type="InParanoid" id="Q09845"/>
<dbReference type="OMA" id="NRMFGNM"/>
<dbReference type="PhylomeDB" id="Q09845"/>
<dbReference type="Reactome" id="R-SPO-1483166">
    <property type="pathway name" value="Synthesis of PA"/>
</dbReference>
<dbReference type="PRO" id="PR:Q09845"/>
<dbReference type="Proteomes" id="UP000002485">
    <property type="component" value="Chromosome I"/>
</dbReference>
<dbReference type="GO" id="GO:0005737">
    <property type="term" value="C:cytoplasm"/>
    <property type="evidence" value="ECO:0007005"/>
    <property type="project" value="PomBase"/>
</dbReference>
<dbReference type="GO" id="GO:0005829">
    <property type="term" value="C:cytosol"/>
    <property type="evidence" value="ECO:0000318"/>
    <property type="project" value="GO_Central"/>
</dbReference>
<dbReference type="GO" id="GO:0005634">
    <property type="term" value="C:nucleus"/>
    <property type="evidence" value="ECO:0000318"/>
    <property type="project" value="GO_Central"/>
</dbReference>
<dbReference type="GO" id="GO:0141152">
    <property type="term" value="F:glycerol-3-phosphate dehydrogenase (NAD+) activity"/>
    <property type="evidence" value="ECO:0007669"/>
    <property type="project" value="UniProtKB-EC"/>
</dbReference>
<dbReference type="GO" id="GO:0051287">
    <property type="term" value="F:NAD binding"/>
    <property type="evidence" value="ECO:0000305"/>
    <property type="project" value="PomBase"/>
</dbReference>
<dbReference type="GO" id="GO:0042803">
    <property type="term" value="F:protein homodimerization activity"/>
    <property type="evidence" value="ECO:0007669"/>
    <property type="project" value="InterPro"/>
</dbReference>
<dbReference type="GO" id="GO:0006114">
    <property type="term" value="P:glycerol biosynthetic process"/>
    <property type="evidence" value="ECO:0000315"/>
    <property type="project" value="PomBase"/>
</dbReference>
<dbReference type="GO" id="GO:0046168">
    <property type="term" value="P:glycerol-3-phosphate catabolic process"/>
    <property type="evidence" value="ECO:0000305"/>
    <property type="project" value="PomBase"/>
</dbReference>
<dbReference type="GO" id="GO:0006072">
    <property type="term" value="P:glycerol-3-phosphate metabolic process"/>
    <property type="evidence" value="ECO:0000318"/>
    <property type="project" value="GO_Central"/>
</dbReference>
<dbReference type="FunFam" id="1.10.1040.10:FF:000004">
    <property type="entry name" value="Glycerol-3-phosphate dehydrogenase [NAD(+)]"/>
    <property type="match status" value="1"/>
</dbReference>
<dbReference type="Gene3D" id="1.10.1040.10">
    <property type="entry name" value="N-(1-d-carboxylethyl)-l-norvaline Dehydrogenase, domain 2"/>
    <property type="match status" value="1"/>
</dbReference>
<dbReference type="Gene3D" id="3.40.50.720">
    <property type="entry name" value="NAD(P)-binding Rossmann-like Domain"/>
    <property type="match status" value="1"/>
</dbReference>
<dbReference type="InterPro" id="IPR008927">
    <property type="entry name" value="6-PGluconate_DH-like_C_sf"/>
</dbReference>
<dbReference type="InterPro" id="IPR013328">
    <property type="entry name" value="6PGD_dom2"/>
</dbReference>
<dbReference type="InterPro" id="IPR006168">
    <property type="entry name" value="G3P_DH_NAD-dep"/>
</dbReference>
<dbReference type="InterPro" id="IPR006109">
    <property type="entry name" value="G3P_DH_NAD-dep_C"/>
</dbReference>
<dbReference type="InterPro" id="IPR017751">
    <property type="entry name" value="G3P_DH_NAD-dep_euk"/>
</dbReference>
<dbReference type="InterPro" id="IPR011128">
    <property type="entry name" value="G3P_DH_NAD-dep_N"/>
</dbReference>
<dbReference type="InterPro" id="IPR036291">
    <property type="entry name" value="NAD(P)-bd_dom_sf"/>
</dbReference>
<dbReference type="NCBIfam" id="TIGR03376">
    <property type="entry name" value="glycerol3P_DH"/>
    <property type="match status" value="1"/>
</dbReference>
<dbReference type="PANTHER" id="PTHR11728">
    <property type="entry name" value="GLYCEROL-3-PHOSPHATE DEHYDROGENASE"/>
    <property type="match status" value="1"/>
</dbReference>
<dbReference type="PANTHER" id="PTHR11728:SF8">
    <property type="entry name" value="GLYCEROL-3-PHOSPHATE DEHYDROGENASE [NAD(+)]-RELATED"/>
    <property type="match status" value="1"/>
</dbReference>
<dbReference type="Pfam" id="PF07479">
    <property type="entry name" value="NAD_Gly3P_dh_C"/>
    <property type="match status" value="1"/>
</dbReference>
<dbReference type="Pfam" id="PF01210">
    <property type="entry name" value="NAD_Gly3P_dh_N"/>
    <property type="match status" value="1"/>
</dbReference>
<dbReference type="PIRSF" id="PIRSF000114">
    <property type="entry name" value="Glycerol-3-P_dh"/>
    <property type="match status" value="1"/>
</dbReference>
<dbReference type="PRINTS" id="PR00077">
    <property type="entry name" value="GPDHDRGNASE"/>
</dbReference>
<dbReference type="SUPFAM" id="SSF48179">
    <property type="entry name" value="6-phosphogluconate dehydrogenase C-terminal domain-like"/>
    <property type="match status" value="1"/>
</dbReference>
<dbReference type="SUPFAM" id="SSF51735">
    <property type="entry name" value="NAD(P)-binding Rossmann-fold domains"/>
    <property type="match status" value="1"/>
</dbReference>
<dbReference type="PROSITE" id="PS00957">
    <property type="entry name" value="NAD_G3PDH"/>
    <property type="match status" value="1"/>
</dbReference>
<accession>Q09845</accession>
<reference key="1">
    <citation type="journal article" date="1995" name="Mol. Microbiol.">
        <title>Osmoregulation of fission yeast: cloning of two distinct genes encoding glycerol-3-phosphate dehydrogenase, one of which is responsible for osmotolerance for growth.</title>
        <authorList>
            <person name="Ohmiya R."/>
            <person name="Yamada H."/>
            <person name="Nakashima K."/>
            <person name="Aiba H."/>
            <person name="Mizuno T."/>
        </authorList>
    </citation>
    <scope>NUCLEOTIDE SEQUENCE [GENOMIC DNA]</scope>
</reference>
<reference key="2">
    <citation type="journal article" date="2002" name="Nature">
        <title>The genome sequence of Schizosaccharomyces pombe.</title>
        <authorList>
            <person name="Wood V."/>
            <person name="Gwilliam R."/>
            <person name="Rajandream M.A."/>
            <person name="Lyne M.H."/>
            <person name="Lyne R."/>
            <person name="Stewart A."/>
            <person name="Sgouros J.G."/>
            <person name="Peat N."/>
            <person name="Hayles J."/>
            <person name="Baker S.G."/>
            <person name="Basham D."/>
            <person name="Bowman S."/>
            <person name="Brooks K."/>
            <person name="Brown D."/>
            <person name="Brown S."/>
            <person name="Chillingworth T."/>
            <person name="Churcher C.M."/>
            <person name="Collins M."/>
            <person name="Connor R."/>
            <person name="Cronin A."/>
            <person name="Davis P."/>
            <person name="Feltwell T."/>
            <person name="Fraser A."/>
            <person name="Gentles S."/>
            <person name="Goble A."/>
            <person name="Hamlin N."/>
            <person name="Harris D.E."/>
            <person name="Hidalgo J."/>
            <person name="Hodgson G."/>
            <person name="Holroyd S."/>
            <person name="Hornsby T."/>
            <person name="Howarth S."/>
            <person name="Huckle E.J."/>
            <person name="Hunt S."/>
            <person name="Jagels K."/>
            <person name="James K.D."/>
            <person name="Jones L."/>
            <person name="Jones M."/>
            <person name="Leather S."/>
            <person name="McDonald S."/>
            <person name="McLean J."/>
            <person name="Mooney P."/>
            <person name="Moule S."/>
            <person name="Mungall K.L."/>
            <person name="Murphy L.D."/>
            <person name="Niblett D."/>
            <person name="Odell C."/>
            <person name="Oliver K."/>
            <person name="O'Neil S."/>
            <person name="Pearson D."/>
            <person name="Quail M.A."/>
            <person name="Rabbinowitsch E."/>
            <person name="Rutherford K.M."/>
            <person name="Rutter S."/>
            <person name="Saunders D."/>
            <person name="Seeger K."/>
            <person name="Sharp S."/>
            <person name="Skelton J."/>
            <person name="Simmonds M.N."/>
            <person name="Squares R."/>
            <person name="Squares S."/>
            <person name="Stevens K."/>
            <person name="Taylor K."/>
            <person name="Taylor R.G."/>
            <person name="Tivey A."/>
            <person name="Walsh S.V."/>
            <person name="Warren T."/>
            <person name="Whitehead S."/>
            <person name="Woodward J.R."/>
            <person name="Volckaert G."/>
            <person name="Aert R."/>
            <person name="Robben J."/>
            <person name="Grymonprez B."/>
            <person name="Weltjens I."/>
            <person name="Vanstreels E."/>
            <person name="Rieger M."/>
            <person name="Schaefer M."/>
            <person name="Mueller-Auer S."/>
            <person name="Gabel C."/>
            <person name="Fuchs M."/>
            <person name="Duesterhoeft A."/>
            <person name="Fritzc C."/>
            <person name="Holzer E."/>
            <person name="Moestl D."/>
            <person name="Hilbert H."/>
            <person name="Borzym K."/>
            <person name="Langer I."/>
            <person name="Beck A."/>
            <person name="Lehrach H."/>
            <person name="Reinhardt R."/>
            <person name="Pohl T.M."/>
            <person name="Eger P."/>
            <person name="Zimmermann W."/>
            <person name="Wedler H."/>
            <person name="Wambutt R."/>
            <person name="Purnelle B."/>
            <person name="Goffeau A."/>
            <person name="Cadieu E."/>
            <person name="Dreano S."/>
            <person name="Gloux S."/>
            <person name="Lelaure V."/>
            <person name="Mottier S."/>
            <person name="Galibert F."/>
            <person name="Aves S.J."/>
            <person name="Xiang Z."/>
            <person name="Hunt C."/>
            <person name="Moore K."/>
            <person name="Hurst S.M."/>
            <person name="Lucas M."/>
            <person name="Rochet M."/>
            <person name="Gaillardin C."/>
            <person name="Tallada V.A."/>
            <person name="Garzon A."/>
            <person name="Thode G."/>
            <person name="Daga R.R."/>
            <person name="Cruzado L."/>
            <person name="Jimenez J."/>
            <person name="Sanchez M."/>
            <person name="del Rey F."/>
            <person name="Benito J."/>
            <person name="Dominguez A."/>
            <person name="Revuelta J.L."/>
            <person name="Moreno S."/>
            <person name="Armstrong J."/>
            <person name="Forsburg S.L."/>
            <person name="Cerutti L."/>
            <person name="Lowe T."/>
            <person name="McCombie W.R."/>
            <person name="Paulsen I."/>
            <person name="Potashkin J."/>
            <person name="Shpakovski G.V."/>
            <person name="Ussery D."/>
            <person name="Barrell B.G."/>
            <person name="Nurse P."/>
        </authorList>
    </citation>
    <scope>NUCLEOTIDE SEQUENCE [LARGE SCALE GENOMIC DNA]</scope>
    <source>
        <strain>972 / ATCC 24843</strain>
    </source>
</reference>
<reference key="3">
    <citation type="journal article" date="2008" name="J. Proteome Res.">
        <title>Phosphoproteome analysis of fission yeast.</title>
        <authorList>
            <person name="Wilson-Grady J.T."/>
            <person name="Villen J."/>
            <person name="Gygi S.P."/>
        </authorList>
    </citation>
    <scope>PHOSPHORYLATION [LARGE SCALE ANALYSIS] AT SER-15</scope>
    <scope>IDENTIFICATION BY MASS SPECTROMETRY</scope>
</reference>
<proteinExistence type="evidence at protein level"/>
<gene>
    <name type="primary">gpd2</name>
    <name type="ORF">SPAC23D3.04c</name>
</gene>
<protein>
    <recommendedName>
        <fullName>Glycerol-3-phosphate dehydrogenase [NAD(+)] 2</fullName>
        <ecNumber>1.1.1.8</ecNumber>
    </recommendedName>
</protein>
<feature type="chain" id="PRO_0000138096" description="Glycerol-3-phosphate dehydrogenase [NAD(+)] 2">
    <location>
        <begin position="1"/>
        <end position="373"/>
    </location>
</feature>
<feature type="active site" description="Proton acceptor" evidence="1">
    <location>
        <position position="236"/>
    </location>
</feature>
<feature type="binding site" evidence="1">
    <location>
        <begin position="31"/>
        <end position="36"/>
    </location>
    <ligand>
        <name>NAD(+)</name>
        <dbReference type="ChEBI" id="CHEBI:57540"/>
    </ligand>
</feature>
<feature type="binding site" evidence="1">
    <location>
        <position position="123"/>
    </location>
    <ligand>
        <name>NAD(+)</name>
        <dbReference type="ChEBI" id="CHEBI:57540"/>
    </ligand>
</feature>
<feature type="binding site" evidence="1">
    <location>
        <position position="146"/>
    </location>
    <ligand>
        <name>NAD(+)</name>
        <dbReference type="ChEBI" id="CHEBI:57540"/>
    </ligand>
</feature>
<feature type="binding site" evidence="1">
    <location>
        <position position="146"/>
    </location>
    <ligand>
        <name>substrate</name>
    </ligand>
</feature>
<feature type="binding site" evidence="1">
    <location>
        <position position="179"/>
    </location>
    <ligand>
        <name>NAD(+)</name>
        <dbReference type="ChEBI" id="CHEBI:57540"/>
    </ligand>
</feature>
<feature type="binding site" evidence="1">
    <location>
        <begin position="300"/>
        <end position="301"/>
    </location>
    <ligand>
        <name>substrate</name>
    </ligand>
</feature>
<feature type="binding site" evidence="1">
    <location>
        <position position="300"/>
    </location>
    <ligand>
        <name>NAD(+)</name>
        <dbReference type="ChEBI" id="CHEBI:57540"/>
    </ligand>
</feature>
<feature type="binding site" evidence="1">
    <location>
        <position position="329"/>
    </location>
    <ligand>
        <name>NAD(+)</name>
        <dbReference type="ChEBI" id="CHEBI:57540"/>
    </ligand>
</feature>
<feature type="modified residue" description="Phosphoserine" evidence="2">
    <location>
        <position position="15"/>
    </location>
</feature>
<name>GPD2_SCHPO</name>
<comment type="catalytic activity">
    <reaction>
        <text>sn-glycerol 3-phosphate + NAD(+) = dihydroxyacetone phosphate + NADH + H(+)</text>
        <dbReference type="Rhea" id="RHEA:11092"/>
        <dbReference type="ChEBI" id="CHEBI:15378"/>
        <dbReference type="ChEBI" id="CHEBI:57540"/>
        <dbReference type="ChEBI" id="CHEBI:57597"/>
        <dbReference type="ChEBI" id="CHEBI:57642"/>
        <dbReference type="ChEBI" id="CHEBI:57945"/>
        <dbReference type="EC" id="1.1.1.8"/>
    </reaction>
</comment>
<comment type="subcellular location">
    <subcellularLocation>
        <location evidence="3">Cytoplasm</location>
    </subcellularLocation>
</comment>
<comment type="similarity">
    <text evidence="3">Belongs to the NAD-dependent glycerol-3-phosphate dehydrogenase family.</text>
</comment>
<organism>
    <name type="scientific">Schizosaccharomyces pombe (strain 972 / ATCC 24843)</name>
    <name type="common">Fission yeast</name>
    <dbReference type="NCBI Taxonomy" id="284812"/>
    <lineage>
        <taxon>Eukaryota</taxon>
        <taxon>Fungi</taxon>
        <taxon>Dikarya</taxon>
        <taxon>Ascomycota</taxon>
        <taxon>Taphrinomycotina</taxon>
        <taxon>Schizosaccharomycetes</taxon>
        <taxon>Schizosaccharomycetales</taxon>
        <taxon>Schizosaccharomycetaceae</taxon>
        <taxon>Schizosaccharomyces</taxon>
    </lineage>
</organism>
<evidence type="ECO:0000250" key="1"/>
<evidence type="ECO:0000269" key="2">
    <source>
    </source>
</evidence>
<evidence type="ECO:0000305" key="3"/>
<keyword id="KW-0963">Cytoplasm</keyword>
<keyword id="KW-0520">NAD</keyword>
<keyword id="KW-0560">Oxidoreductase</keyword>
<keyword id="KW-0597">Phosphoprotein</keyword>
<keyword id="KW-1185">Reference proteome</keyword>
<sequence>MTVAALNKLSALSGSIQKSFSPKLISVGIIGSGNWGTAIAKICGENAKAHPDIFHPQVHMWMYEEKIQHEGKECNLTEVFNTTHENVKYLKGIKCPSNVFANPDIRDVGSRSDILVWVLPHQFVVRICNQLKGCLKKDAVAISCIKGVSVTKDRVRLFSDIIEENTGMYCGVLSGANIASEVAQEKFCETTIGYLPNSSVNPRYTPKTIQALFNRPYFRVNIVEDVPGVALGGALKNIVAVAAGIIDGLELGDNTKSAVMRIGLLEMQKFGRMFFDCKPLTMSEESCGIADLITTCLGGRNHKCAVAFVKTGKPMHVVEQELLDGQKLQGAATAKEVYEFLDNQNKVSEFPLFTAVYRIVYEGLPPNKLLEAI</sequence>